<name>RL22_RUEST</name>
<dbReference type="EMBL" id="CP000377">
    <property type="protein sequence ID" value="ABF62987.1"/>
    <property type="molecule type" value="Genomic_DNA"/>
</dbReference>
<dbReference type="RefSeq" id="WP_009176439.1">
    <property type="nucleotide sequence ID" value="NC_008044.1"/>
</dbReference>
<dbReference type="SMR" id="Q1GK29"/>
<dbReference type="STRING" id="292414.TM1040_0254"/>
<dbReference type="KEGG" id="sit:TM1040_0254"/>
<dbReference type="eggNOG" id="COG0091">
    <property type="taxonomic scope" value="Bacteria"/>
</dbReference>
<dbReference type="HOGENOM" id="CLU_083987_3_0_5"/>
<dbReference type="OrthoDB" id="9805969at2"/>
<dbReference type="Proteomes" id="UP000000636">
    <property type="component" value="Chromosome"/>
</dbReference>
<dbReference type="GO" id="GO:0022625">
    <property type="term" value="C:cytosolic large ribosomal subunit"/>
    <property type="evidence" value="ECO:0007669"/>
    <property type="project" value="TreeGrafter"/>
</dbReference>
<dbReference type="GO" id="GO:0019843">
    <property type="term" value="F:rRNA binding"/>
    <property type="evidence" value="ECO:0007669"/>
    <property type="project" value="UniProtKB-UniRule"/>
</dbReference>
<dbReference type="GO" id="GO:0003735">
    <property type="term" value="F:structural constituent of ribosome"/>
    <property type="evidence" value="ECO:0007669"/>
    <property type="project" value="InterPro"/>
</dbReference>
<dbReference type="GO" id="GO:0006412">
    <property type="term" value="P:translation"/>
    <property type="evidence" value="ECO:0007669"/>
    <property type="project" value="UniProtKB-UniRule"/>
</dbReference>
<dbReference type="CDD" id="cd00336">
    <property type="entry name" value="Ribosomal_L22"/>
    <property type="match status" value="1"/>
</dbReference>
<dbReference type="Gene3D" id="3.90.470.10">
    <property type="entry name" value="Ribosomal protein L22/L17"/>
    <property type="match status" value="1"/>
</dbReference>
<dbReference type="HAMAP" id="MF_01331_B">
    <property type="entry name" value="Ribosomal_uL22_B"/>
    <property type="match status" value="1"/>
</dbReference>
<dbReference type="InterPro" id="IPR001063">
    <property type="entry name" value="Ribosomal_uL22"/>
</dbReference>
<dbReference type="InterPro" id="IPR005727">
    <property type="entry name" value="Ribosomal_uL22_bac/chlpt-type"/>
</dbReference>
<dbReference type="InterPro" id="IPR047867">
    <property type="entry name" value="Ribosomal_uL22_bac/org-type"/>
</dbReference>
<dbReference type="InterPro" id="IPR036394">
    <property type="entry name" value="Ribosomal_uL22_sf"/>
</dbReference>
<dbReference type="NCBIfam" id="TIGR01044">
    <property type="entry name" value="rplV_bact"/>
    <property type="match status" value="1"/>
</dbReference>
<dbReference type="PANTHER" id="PTHR13501">
    <property type="entry name" value="CHLOROPLAST 50S RIBOSOMAL PROTEIN L22-RELATED"/>
    <property type="match status" value="1"/>
</dbReference>
<dbReference type="PANTHER" id="PTHR13501:SF8">
    <property type="entry name" value="LARGE RIBOSOMAL SUBUNIT PROTEIN UL22M"/>
    <property type="match status" value="1"/>
</dbReference>
<dbReference type="Pfam" id="PF00237">
    <property type="entry name" value="Ribosomal_L22"/>
    <property type="match status" value="1"/>
</dbReference>
<dbReference type="SUPFAM" id="SSF54843">
    <property type="entry name" value="Ribosomal protein L22"/>
    <property type="match status" value="1"/>
</dbReference>
<proteinExistence type="inferred from homology"/>
<reference key="1">
    <citation type="submission" date="2006-05" db="EMBL/GenBank/DDBJ databases">
        <title>Complete sequence of chromosome of Silicibacter sp. TM1040.</title>
        <authorList>
            <consortium name="US DOE Joint Genome Institute"/>
            <person name="Copeland A."/>
            <person name="Lucas S."/>
            <person name="Lapidus A."/>
            <person name="Barry K."/>
            <person name="Detter J.C."/>
            <person name="Glavina del Rio T."/>
            <person name="Hammon N."/>
            <person name="Israni S."/>
            <person name="Dalin E."/>
            <person name="Tice H."/>
            <person name="Pitluck S."/>
            <person name="Brettin T."/>
            <person name="Bruce D."/>
            <person name="Han C."/>
            <person name="Tapia R."/>
            <person name="Goodwin L."/>
            <person name="Thompson L.S."/>
            <person name="Gilna P."/>
            <person name="Schmutz J."/>
            <person name="Larimer F."/>
            <person name="Land M."/>
            <person name="Hauser L."/>
            <person name="Kyrpides N."/>
            <person name="Kim E."/>
            <person name="Belas R."/>
            <person name="Moran M.A."/>
            <person name="Buchan A."/>
            <person name="Gonzalez J.M."/>
            <person name="Schell M.A."/>
            <person name="Sun F."/>
            <person name="Richardson P."/>
        </authorList>
    </citation>
    <scope>NUCLEOTIDE SEQUENCE [LARGE SCALE GENOMIC DNA]</scope>
    <source>
        <strain>TM1040</strain>
    </source>
</reference>
<organism>
    <name type="scientific">Ruegeria sp. (strain TM1040)</name>
    <name type="common">Silicibacter sp.</name>
    <dbReference type="NCBI Taxonomy" id="292414"/>
    <lineage>
        <taxon>Bacteria</taxon>
        <taxon>Pseudomonadati</taxon>
        <taxon>Pseudomonadota</taxon>
        <taxon>Alphaproteobacteria</taxon>
        <taxon>Rhodobacterales</taxon>
        <taxon>Roseobacteraceae</taxon>
        <taxon>Ruegeria</taxon>
    </lineage>
</organism>
<sequence>MGKDKNPRRVADNEAMAKVRMLRTSPQKLNLVAQMIRGKKVDKALTDLTFSNKRIAQDVKKCLQSAIANAENNHNLDVDELIVAEAWVGKNLTMKRGRPRARGRFGKILKPFAEITIKVRQVEEQA</sequence>
<evidence type="ECO:0000255" key="1">
    <source>
        <dbReference type="HAMAP-Rule" id="MF_01331"/>
    </source>
</evidence>
<evidence type="ECO:0000305" key="2"/>
<comment type="function">
    <text evidence="1">This protein binds specifically to 23S rRNA; its binding is stimulated by other ribosomal proteins, e.g. L4, L17, and L20. It is important during the early stages of 50S assembly. It makes multiple contacts with different domains of the 23S rRNA in the assembled 50S subunit and ribosome (By similarity).</text>
</comment>
<comment type="function">
    <text evidence="1">The globular domain of the protein is located near the polypeptide exit tunnel on the outside of the subunit, while an extended beta-hairpin is found that lines the wall of the exit tunnel in the center of the 70S ribosome.</text>
</comment>
<comment type="subunit">
    <text evidence="1">Part of the 50S ribosomal subunit.</text>
</comment>
<comment type="similarity">
    <text evidence="1">Belongs to the universal ribosomal protein uL22 family.</text>
</comment>
<feature type="chain" id="PRO_1000052654" description="Large ribosomal subunit protein uL22">
    <location>
        <begin position="1"/>
        <end position="126"/>
    </location>
</feature>
<protein>
    <recommendedName>
        <fullName evidence="1">Large ribosomal subunit protein uL22</fullName>
    </recommendedName>
    <alternativeName>
        <fullName evidence="2">50S ribosomal protein L22</fullName>
    </alternativeName>
</protein>
<accession>Q1GK29</accession>
<keyword id="KW-1185">Reference proteome</keyword>
<keyword id="KW-0687">Ribonucleoprotein</keyword>
<keyword id="KW-0689">Ribosomal protein</keyword>
<keyword id="KW-0694">RNA-binding</keyword>
<keyword id="KW-0699">rRNA-binding</keyword>
<gene>
    <name evidence="1" type="primary">rplV</name>
    <name type="ordered locus">TM1040_0254</name>
</gene>